<gene>
    <name type="primary">PRTN3</name>
    <name type="synonym">MBN</name>
</gene>
<dbReference type="EC" id="3.4.21.76" evidence="8 10 11 14 16 19"/>
<dbReference type="EMBL" id="M75154">
    <property type="protein sequence ID" value="AAA59558.1"/>
    <property type="molecule type" value="mRNA"/>
</dbReference>
<dbReference type="EMBL" id="AC004799">
    <property type="status" value="NOT_ANNOTATED_CDS"/>
    <property type="molecule type" value="Genomic_DNA"/>
</dbReference>
<dbReference type="EMBL" id="CH471139">
    <property type="protein sequence ID" value="EAW69591.1"/>
    <property type="molecule type" value="Genomic_DNA"/>
</dbReference>
<dbReference type="EMBL" id="BC096183">
    <property type="protein sequence ID" value="AAH96183.1"/>
    <property type="molecule type" value="mRNA"/>
</dbReference>
<dbReference type="EMBL" id="BC096184">
    <property type="protein sequence ID" value="AAH96184.1"/>
    <property type="molecule type" value="mRNA"/>
</dbReference>
<dbReference type="EMBL" id="BC096185">
    <property type="protein sequence ID" value="AAH96185.1"/>
    <property type="molecule type" value="mRNA"/>
</dbReference>
<dbReference type="EMBL" id="BC096186">
    <property type="protein sequence ID" value="AAH96186.1"/>
    <property type="molecule type" value="mRNA"/>
</dbReference>
<dbReference type="EMBL" id="M96628">
    <property type="protein sequence ID" value="AAB59364.1"/>
    <property type="molecule type" value="Genomic_DNA"/>
</dbReference>
<dbReference type="EMBL" id="AH005293">
    <property type="protein sequence ID" value="AAB59493.1"/>
    <property type="molecule type" value="Genomic_DNA"/>
</dbReference>
<dbReference type="EMBL" id="M97911">
    <property type="status" value="NOT_ANNOTATED_CDS"/>
    <property type="molecule type" value="Genomic_DNA"/>
</dbReference>
<dbReference type="EMBL" id="AH007523">
    <property type="protein sequence ID" value="AAD21524.1"/>
    <property type="molecule type" value="Genomic_DNA"/>
</dbReference>
<dbReference type="EMBL" id="X56606">
    <property type="protein sequence ID" value="CAA39943.1"/>
    <property type="molecule type" value="mRNA"/>
</dbReference>
<dbReference type="EMBL" id="X55668">
    <property type="protein sequence ID" value="CAA39203.1"/>
    <property type="molecule type" value="mRNA"/>
</dbReference>
<dbReference type="EMBL" id="M29142">
    <property type="protein sequence ID" value="AAA36342.1"/>
    <property type="status" value="ALT_FRAME"/>
    <property type="molecule type" value="mRNA"/>
</dbReference>
<dbReference type="EMBL" id="X56132">
    <property type="protein sequence ID" value="CAA39597.1"/>
    <property type="molecule type" value="mRNA"/>
</dbReference>
<dbReference type="EMBL" id="X56132">
    <property type="protein sequence ID" value="CAA39598.1"/>
    <property type="status" value="ALT_INIT"/>
    <property type="molecule type" value="mRNA"/>
</dbReference>
<dbReference type="CCDS" id="CCDS32860.1"/>
<dbReference type="PIR" id="A45080">
    <property type="entry name" value="PRHU3"/>
</dbReference>
<dbReference type="RefSeq" id="NP_002768.3">
    <property type="nucleotide sequence ID" value="NM_002777.3"/>
</dbReference>
<dbReference type="PDB" id="1FUJ">
    <property type="method" value="X-ray"/>
    <property type="resolution" value="2.20 A"/>
    <property type="chains" value="A/B/C/D=28-248"/>
</dbReference>
<dbReference type="PDBsum" id="1FUJ"/>
<dbReference type="SMR" id="P24158"/>
<dbReference type="BioGRID" id="111638">
    <property type="interactions" value="108"/>
</dbReference>
<dbReference type="DIP" id="DIP-31107N"/>
<dbReference type="FunCoup" id="P24158">
    <property type="interactions" value="176"/>
</dbReference>
<dbReference type="IntAct" id="P24158">
    <property type="interactions" value="78"/>
</dbReference>
<dbReference type="MINT" id="P24158"/>
<dbReference type="STRING" id="9606.ENSP00000234347"/>
<dbReference type="BindingDB" id="P24158"/>
<dbReference type="ChEMBL" id="CHEMBL3900"/>
<dbReference type="DrugBank" id="DB05161">
    <property type="generic name" value="Elafin"/>
</dbReference>
<dbReference type="DrugBank" id="DB18368">
    <property type="generic name" value="Tiprelestat"/>
</dbReference>
<dbReference type="DrugCentral" id="P24158"/>
<dbReference type="GuidetoPHARMACOLOGY" id="2401"/>
<dbReference type="MEROPS" id="S01.134"/>
<dbReference type="GlyConnect" id="1529">
    <property type="glycosylation" value="2 N-Linked glycans (1 site)"/>
</dbReference>
<dbReference type="GlyCosmos" id="P24158">
    <property type="glycosylation" value="2 sites, 1 glycan"/>
</dbReference>
<dbReference type="GlyGen" id="P24158">
    <property type="glycosylation" value="3 sites, 1 N-linked glycan (1 site)"/>
</dbReference>
<dbReference type="iPTMnet" id="P24158"/>
<dbReference type="BioMuta" id="PRTN3"/>
<dbReference type="DMDM" id="6174926"/>
<dbReference type="CPTAC" id="non-CPTAC-1142"/>
<dbReference type="jPOST" id="P24158"/>
<dbReference type="MassIVE" id="P24158"/>
<dbReference type="PaxDb" id="9606-ENSP00000234347"/>
<dbReference type="PeptideAtlas" id="P24158"/>
<dbReference type="PRIDE" id="P24158"/>
<dbReference type="ProteomicsDB" id="54192"/>
<dbReference type="ABCD" id="P24158">
    <property type="antibodies" value="4 sequenced antibodies"/>
</dbReference>
<dbReference type="Antibodypedia" id="1069">
    <property type="antibodies" value="557 antibodies from 38 providers"/>
</dbReference>
<dbReference type="DNASU" id="5657"/>
<dbReference type="Ensembl" id="ENST00000234347.10">
    <property type="protein sequence ID" value="ENSP00000234347.3"/>
    <property type="gene ID" value="ENSG00000196415.10"/>
</dbReference>
<dbReference type="Ensembl" id="ENST00000612112.4">
    <property type="protein sequence ID" value="ENSP00000478977.1"/>
    <property type="gene ID" value="ENSG00000277804.4"/>
</dbReference>
<dbReference type="GeneID" id="5657"/>
<dbReference type="KEGG" id="hsa:5657"/>
<dbReference type="MANE-Select" id="ENST00000234347.10">
    <property type="protein sequence ID" value="ENSP00000234347.3"/>
    <property type="RefSeq nucleotide sequence ID" value="NM_002777.4"/>
    <property type="RefSeq protein sequence ID" value="NP_002768.3"/>
</dbReference>
<dbReference type="UCSC" id="uc002lqa.2">
    <property type="organism name" value="human"/>
</dbReference>
<dbReference type="AGR" id="HGNC:9495"/>
<dbReference type="CTD" id="5657"/>
<dbReference type="DisGeNET" id="5657"/>
<dbReference type="GeneCards" id="PRTN3"/>
<dbReference type="HGNC" id="HGNC:9495">
    <property type="gene designation" value="PRTN3"/>
</dbReference>
<dbReference type="HPA" id="ENSG00000196415">
    <property type="expression patterns" value="Tissue enriched (bone)"/>
</dbReference>
<dbReference type="MalaCards" id="PRTN3"/>
<dbReference type="MIM" id="177020">
    <property type="type" value="gene"/>
</dbReference>
<dbReference type="neXtProt" id="NX_P24158"/>
<dbReference type="OpenTargets" id="ENSG00000196415"/>
<dbReference type="Orphanet" id="900">
    <property type="disease" value="Granulomatosis with polyangiitis"/>
</dbReference>
<dbReference type="PharmGKB" id="PA33842"/>
<dbReference type="VEuPathDB" id="HostDB:ENSG00000196415"/>
<dbReference type="eggNOG" id="KOG3627">
    <property type="taxonomic scope" value="Eukaryota"/>
</dbReference>
<dbReference type="GeneTree" id="ENSGT01030000234528"/>
<dbReference type="HOGENOM" id="CLU_006842_1_0_1"/>
<dbReference type="InParanoid" id="P24158"/>
<dbReference type="OMA" id="FENNYDP"/>
<dbReference type="OrthoDB" id="8440449at2759"/>
<dbReference type="PAN-GO" id="P24158">
    <property type="GO annotations" value="4 GO annotations based on evolutionary models"/>
</dbReference>
<dbReference type="PhylomeDB" id="P24158"/>
<dbReference type="TreeFam" id="TF335284"/>
<dbReference type="BRENDA" id="3.4.21.76">
    <property type="organism ID" value="2681"/>
</dbReference>
<dbReference type="PathwayCommons" id="P24158"/>
<dbReference type="Reactome" id="R-HSA-140875">
    <property type="pathway name" value="Common Pathway of Fibrin Clot Formation"/>
</dbReference>
<dbReference type="Reactome" id="R-HSA-449836">
    <property type="pathway name" value="Other interleukin signaling"/>
</dbReference>
<dbReference type="Reactome" id="R-HSA-6798695">
    <property type="pathway name" value="Neutrophil degranulation"/>
</dbReference>
<dbReference type="Reactome" id="R-HSA-6803157">
    <property type="pathway name" value="Antimicrobial peptides"/>
</dbReference>
<dbReference type="SABIO-RK" id="P24158"/>
<dbReference type="SignaLink" id="P24158"/>
<dbReference type="SIGNOR" id="P24158"/>
<dbReference type="STRENDA-DB" id="3JIILJ">
    <property type="experiment" value="Nonessential activation of myeloblastin by sulfated glycosaminoglycans"/>
</dbReference>
<dbReference type="STRENDA-DB" id="D9YPHC">
    <property type="experiment" value="Human Myeloblastin: Kinetics with Four Synthethic Substrates"/>
</dbReference>
<dbReference type="BioGRID-ORCS" id="5657">
    <property type="hits" value="11 hits in 1147 CRISPR screens"/>
</dbReference>
<dbReference type="EvolutionaryTrace" id="P24158"/>
<dbReference type="GeneWiki" id="Proteinase_3"/>
<dbReference type="GenomeRNAi" id="5657"/>
<dbReference type="Pharos" id="P24158">
    <property type="development level" value="Tchem"/>
</dbReference>
<dbReference type="PRO" id="PR:P24158"/>
<dbReference type="Proteomes" id="UP000005640">
    <property type="component" value="Chromosome 19"/>
</dbReference>
<dbReference type="RNAct" id="P24158">
    <property type="molecule type" value="protein"/>
</dbReference>
<dbReference type="Bgee" id="ENSG00000196415">
    <property type="expression patterns" value="Expressed in bone marrow and 73 other cell types or tissues"/>
</dbReference>
<dbReference type="ExpressionAtlas" id="P24158">
    <property type="expression patterns" value="baseline and differential"/>
</dbReference>
<dbReference type="GO" id="GO:0035578">
    <property type="term" value="C:azurophil granule lumen"/>
    <property type="evidence" value="ECO:0000314"/>
    <property type="project" value="UniProtKB"/>
</dbReference>
<dbReference type="GO" id="GO:0005829">
    <property type="term" value="C:cytosol"/>
    <property type="evidence" value="ECO:0000314"/>
    <property type="project" value="UniProtKB"/>
</dbReference>
<dbReference type="GO" id="GO:0070062">
    <property type="term" value="C:extracellular exosome"/>
    <property type="evidence" value="ECO:0007005"/>
    <property type="project" value="UniProtKB"/>
</dbReference>
<dbReference type="GO" id="GO:0005576">
    <property type="term" value="C:extracellular region"/>
    <property type="evidence" value="ECO:0000304"/>
    <property type="project" value="Reactome"/>
</dbReference>
<dbReference type="GO" id="GO:0005615">
    <property type="term" value="C:extracellular space"/>
    <property type="evidence" value="ECO:0007005"/>
    <property type="project" value="UniProtKB"/>
</dbReference>
<dbReference type="GO" id="GO:0043231">
    <property type="term" value="C:intracellular membrane-bounded organelle"/>
    <property type="evidence" value="ECO:0000314"/>
    <property type="project" value="HPA"/>
</dbReference>
<dbReference type="GO" id="GO:0005886">
    <property type="term" value="C:plasma membrane"/>
    <property type="evidence" value="ECO:0000314"/>
    <property type="project" value="UniProtKB"/>
</dbReference>
<dbReference type="GO" id="GO:0044853">
    <property type="term" value="C:plasma membrane raft"/>
    <property type="evidence" value="ECO:0000314"/>
    <property type="project" value="UniProtKB"/>
</dbReference>
<dbReference type="GO" id="GO:0019899">
    <property type="term" value="F:enzyme binding"/>
    <property type="evidence" value="ECO:0000353"/>
    <property type="project" value="UniProtKB"/>
</dbReference>
<dbReference type="GO" id="GO:0004252">
    <property type="term" value="F:serine-type endopeptidase activity"/>
    <property type="evidence" value="ECO:0000314"/>
    <property type="project" value="UniProtKB"/>
</dbReference>
<dbReference type="GO" id="GO:0008236">
    <property type="term" value="F:serine-type peptidase activity"/>
    <property type="evidence" value="ECO:0000304"/>
    <property type="project" value="ProtInc"/>
</dbReference>
<dbReference type="GO" id="GO:0005102">
    <property type="term" value="F:signaling receptor binding"/>
    <property type="evidence" value="ECO:0000353"/>
    <property type="project" value="UniProtKB"/>
</dbReference>
<dbReference type="GO" id="GO:0019730">
    <property type="term" value="P:antimicrobial humoral response"/>
    <property type="evidence" value="ECO:0000304"/>
    <property type="project" value="Reactome"/>
</dbReference>
<dbReference type="GO" id="GO:0045217">
    <property type="term" value="P:cell-cell junction maintenance"/>
    <property type="evidence" value="ECO:0000315"/>
    <property type="project" value="UniProtKB"/>
</dbReference>
<dbReference type="GO" id="GO:0030574">
    <property type="term" value="P:collagen catabolic process"/>
    <property type="evidence" value="ECO:0007669"/>
    <property type="project" value="UniProtKB-KW"/>
</dbReference>
<dbReference type="GO" id="GO:0097029">
    <property type="term" value="P:mature conventional dendritic cell differentiation"/>
    <property type="evidence" value="ECO:0000314"/>
    <property type="project" value="UniProtKB"/>
</dbReference>
<dbReference type="GO" id="GO:0006509">
    <property type="term" value="P:membrane protein ectodomain proteolysis"/>
    <property type="evidence" value="ECO:0000315"/>
    <property type="project" value="UniProtKB"/>
</dbReference>
<dbReference type="GO" id="GO:0050765">
    <property type="term" value="P:negative regulation of phagocytosis"/>
    <property type="evidence" value="ECO:0000314"/>
    <property type="project" value="UniProtKB"/>
</dbReference>
<dbReference type="GO" id="GO:0072672">
    <property type="term" value="P:neutrophil extravasation"/>
    <property type="evidence" value="ECO:0000315"/>
    <property type="project" value="UniProtKB"/>
</dbReference>
<dbReference type="GO" id="GO:0008284">
    <property type="term" value="P:positive regulation of cell population proliferation"/>
    <property type="evidence" value="ECO:0000304"/>
    <property type="project" value="ProtInc"/>
</dbReference>
<dbReference type="GO" id="GO:0043547">
    <property type="term" value="P:positive regulation of GTPase activity"/>
    <property type="evidence" value="ECO:0000315"/>
    <property type="project" value="UniProtKB"/>
</dbReference>
<dbReference type="GO" id="GO:0006508">
    <property type="term" value="P:proteolysis"/>
    <property type="evidence" value="ECO:0000314"/>
    <property type="project" value="UniProtKB"/>
</dbReference>
<dbReference type="CDD" id="cd00190">
    <property type="entry name" value="Tryp_SPc"/>
    <property type="match status" value="1"/>
</dbReference>
<dbReference type="FunFam" id="2.40.10.10:FF:000372">
    <property type="entry name" value="Myeloblastin"/>
    <property type="match status" value="1"/>
</dbReference>
<dbReference type="Gene3D" id="2.40.10.10">
    <property type="entry name" value="Trypsin-like serine proteases"/>
    <property type="match status" value="2"/>
</dbReference>
<dbReference type="InterPro" id="IPR050850">
    <property type="entry name" value="Peptidase_S1_Elastase_sf"/>
</dbReference>
<dbReference type="InterPro" id="IPR009003">
    <property type="entry name" value="Peptidase_S1_PA"/>
</dbReference>
<dbReference type="InterPro" id="IPR043504">
    <property type="entry name" value="Peptidase_S1_PA_chymotrypsin"/>
</dbReference>
<dbReference type="InterPro" id="IPR001314">
    <property type="entry name" value="Peptidase_S1A"/>
</dbReference>
<dbReference type="InterPro" id="IPR001254">
    <property type="entry name" value="Trypsin_dom"/>
</dbReference>
<dbReference type="InterPro" id="IPR018114">
    <property type="entry name" value="TRYPSIN_HIS"/>
</dbReference>
<dbReference type="InterPro" id="IPR033116">
    <property type="entry name" value="TRYPSIN_SER"/>
</dbReference>
<dbReference type="PANTHER" id="PTHR24257">
    <property type="entry name" value="CHYMOTRYPSIN-LIKE ELASTASE FAMILY MEMBER"/>
    <property type="match status" value="1"/>
</dbReference>
<dbReference type="PANTHER" id="PTHR24257:SF15">
    <property type="entry name" value="MYELOBLASTIN"/>
    <property type="match status" value="1"/>
</dbReference>
<dbReference type="Pfam" id="PF00089">
    <property type="entry name" value="Trypsin"/>
    <property type="match status" value="1"/>
</dbReference>
<dbReference type="PRINTS" id="PR00722">
    <property type="entry name" value="CHYMOTRYPSIN"/>
</dbReference>
<dbReference type="SMART" id="SM00020">
    <property type="entry name" value="Tryp_SPc"/>
    <property type="match status" value="1"/>
</dbReference>
<dbReference type="SUPFAM" id="SSF50494">
    <property type="entry name" value="Trypsin-like serine proteases"/>
    <property type="match status" value="1"/>
</dbReference>
<dbReference type="PROSITE" id="PS50240">
    <property type="entry name" value="TRYPSIN_DOM"/>
    <property type="match status" value="1"/>
</dbReference>
<dbReference type="PROSITE" id="PS00134">
    <property type="entry name" value="TRYPSIN_HIS"/>
    <property type="match status" value="1"/>
</dbReference>
<dbReference type="PROSITE" id="PS00135">
    <property type="entry name" value="TRYPSIN_SER"/>
    <property type="match status" value="1"/>
</dbReference>
<sequence>MAHRPPSPALASVLLALLLSGAARAAEIVGGHEAQPHSRPYMASLQMRGNPGSHFCGGTLIHPSFVLTAAHCLRDIPQRLVNVVLGAHNVRTQEPTQQHFSVAQVFLNNYDAENKLNDVLLIQLSSPANLSASVATVQLPQQDQPVPHGTQCLAMGWGRVGAHDPPAQVLQELNVTVVTFFCRPHNICTFVPRRKAGICFGDSGGPLICDGIIQGIDSFVIWGCATRLFPDFFTRVALYVDWIRSTLRRVEAKGRP</sequence>
<keyword id="KW-0002">3D-structure</keyword>
<keyword id="KW-1003">Cell membrane</keyword>
<keyword id="KW-0177">Collagen degradation</keyword>
<keyword id="KW-0903">Direct protein sequencing</keyword>
<keyword id="KW-1015">Disulfide bond</keyword>
<keyword id="KW-0325">Glycoprotein</keyword>
<keyword id="KW-0378">Hydrolase</keyword>
<keyword id="KW-0472">Membrane</keyword>
<keyword id="KW-0645">Protease</keyword>
<keyword id="KW-1267">Proteomics identification</keyword>
<keyword id="KW-1185">Reference proteome</keyword>
<keyword id="KW-0964">Secreted</keyword>
<keyword id="KW-0720">Serine protease</keyword>
<keyword id="KW-0732">Signal</keyword>
<keyword id="KW-0865">Zymogen</keyword>
<name>PRTN3_HUMAN</name>
<organism>
    <name type="scientific">Homo sapiens</name>
    <name type="common">Human</name>
    <dbReference type="NCBI Taxonomy" id="9606"/>
    <lineage>
        <taxon>Eukaryota</taxon>
        <taxon>Metazoa</taxon>
        <taxon>Chordata</taxon>
        <taxon>Craniata</taxon>
        <taxon>Vertebrata</taxon>
        <taxon>Euteleostomi</taxon>
        <taxon>Mammalia</taxon>
        <taxon>Eutheria</taxon>
        <taxon>Euarchontoglires</taxon>
        <taxon>Primates</taxon>
        <taxon>Haplorrhini</taxon>
        <taxon>Catarrhini</taxon>
        <taxon>Hominidae</taxon>
        <taxon>Homo</taxon>
    </lineage>
</organism>
<proteinExistence type="evidence at protein level"/>
<accession>P24158</accession>
<accession>P15637</accession>
<accession>P18078</accession>
<accession>Q4VB08</accession>
<accession>Q4VB09</accession>
<accession>Q6LBM7</accession>
<accession>Q6LBN2</accession>
<accession>Q9UD25</accession>
<accession>Q9UQD8</accession>
<feature type="signal peptide">
    <location>
        <begin position="1"/>
        <end position="25"/>
    </location>
</feature>
<feature type="propeptide" id="PRO_0000027707">
    <location>
        <begin position="26"/>
        <end position="27"/>
    </location>
</feature>
<feature type="chain" id="PRO_0000027708" description="Myeloblastin" evidence="26 28 29 30">
    <location>
        <begin position="28"/>
        <end position="248"/>
    </location>
</feature>
<feature type="propeptide" id="PRO_0000027709">
    <location>
        <begin position="249"/>
        <end position="256"/>
    </location>
</feature>
<feature type="domain" description="Peptidase S1" evidence="2">
    <location>
        <begin position="28"/>
        <end position="248"/>
    </location>
</feature>
<feature type="active site" description="Charge relay system" evidence="2">
    <location>
        <position position="71"/>
    </location>
</feature>
<feature type="active site" description="Charge relay system" evidence="2">
    <location>
        <position position="118"/>
    </location>
</feature>
<feature type="active site" description="Charge relay system" evidence="2">
    <location>
        <position position="203"/>
    </location>
</feature>
<feature type="glycosylation site" description="N-linked (GlcNAc...) asparagine" evidence="1">
    <location>
        <position position="129"/>
    </location>
</feature>
<feature type="glycosylation site" description="N-linked (GlcNAc...) asparagine" evidence="20 31">
    <location>
        <position position="174"/>
    </location>
</feature>
<feature type="disulfide bond" evidence="20 31">
    <location>
        <begin position="56"/>
        <end position="72"/>
    </location>
</feature>
<feature type="disulfide bond" evidence="20 31">
    <location>
        <begin position="152"/>
        <end position="209"/>
    </location>
</feature>
<feature type="disulfide bond" evidence="20 31">
    <location>
        <begin position="182"/>
        <end position="188"/>
    </location>
</feature>
<feature type="disulfide bond" evidence="20 31">
    <location>
        <begin position="199"/>
        <end position="224"/>
    </location>
</feature>
<feature type="sequence variant" id="VAR_011691" description="In dbSNP:rs351111." evidence="4 5 12 13 18 21 22">
    <original>V</original>
    <variation>I</variation>
    <location>
        <position position="119"/>
    </location>
</feature>
<feature type="sequence variant" id="VAR_011713" description="In dbSNP:rs1042281." evidence="3 5 12 13">
    <original>A</original>
    <variation>T</variation>
    <location>
        <position position="135"/>
    </location>
</feature>
<feature type="sequence variant" id="VAR_011714" description="In dbSNP:rs1042282." evidence="3 5 12 13">
    <original>T</original>
    <variation>S</variation>
    <location>
        <position position="136"/>
    </location>
</feature>
<feature type="sequence conflict" description="In Ref. 9; CAA39203." evidence="25" ref="9">
    <original>A</original>
    <variation>R</variation>
    <location>
        <position position="2"/>
    </location>
</feature>
<feature type="sequence conflict" description="In Ref. 19; AA sequence." evidence="25" ref="19">
    <original>S</original>
    <variation>I</variation>
    <location>
        <position position="38"/>
    </location>
</feature>
<feature type="sequence conflict" description="In Ref. 19; AA sequence." evidence="25" ref="19">
    <original>P</original>
    <variation>PI</variation>
    <location>
        <position position="40"/>
    </location>
</feature>
<feature type="sequence conflict" description="In Ref. 13; AA sequence and 17; AA sequence." evidence="25" ref="13 17">
    <original>Q</original>
    <variation>E</variation>
    <location>
        <position position="46"/>
    </location>
</feature>
<feature type="sequence conflict" description="In Ref. 14; AA sequence." evidence="25" ref="14">
    <original>R</original>
    <variation>A</variation>
    <location>
        <position position="48"/>
    </location>
</feature>
<feature type="sequence conflict" description="In Ref. 12; AA sequence." evidence="25" ref="12">
    <original>S</original>
    <variation>D</variation>
    <location>
        <position position="64"/>
    </location>
</feature>
<feature type="sequence conflict" description="In Ref. 1; AAA59558." evidence="25" ref="1">
    <original>A</original>
    <variation>P</variation>
    <location>
        <position position="70"/>
    </location>
</feature>
<feature type="sequence conflict" description="In Ref. 9; CAA39203." evidence="25" ref="9">
    <location>
        <position position="255"/>
    </location>
</feature>
<feature type="strand" evidence="32">
    <location>
        <begin position="42"/>
        <end position="47"/>
    </location>
</feature>
<feature type="strand" evidence="32">
    <location>
        <begin position="56"/>
        <end position="62"/>
    </location>
</feature>
<feature type="strand" evidence="32">
    <location>
        <begin position="65"/>
        <end position="68"/>
    </location>
</feature>
<feature type="helix" evidence="32">
    <location>
        <begin position="70"/>
        <end position="73"/>
    </location>
</feature>
<feature type="strand" evidence="32">
    <location>
        <begin position="74"/>
        <end position="76"/>
    </location>
</feature>
<feature type="helix" evidence="32">
    <location>
        <begin position="78"/>
        <end position="80"/>
    </location>
</feature>
<feature type="strand" evidence="32">
    <location>
        <begin position="81"/>
        <end position="86"/>
    </location>
</feature>
<feature type="strand" evidence="32">
    <location>
        <begin position="98"/>
        <end position="107"/>
    </location>
</feature>
<feature type="turn" evidence="32">
    <location>
        <begin position="112"/>
        <end position="115"/>
    </location>
</feature>
<feature type="strand" evidence="32">
    <location>
        <begin position="120"/>
        <end position="126"/>
    </location>
</feature>
<feature type="strand" evidence="32">
    <location>
        <begin position="151"/>
        <end position="160"/>
    </location>
</feature>
<feature type="strand" evidence="32">
    <location>
        <begin position="162"/>
        <end position="164"/>
    </location>
</feature>
<feature type="strand" evidence="32">
    <location>
        <begin position="171"/>
        <end position="178"/>
    </location>
</feature>
<feature type="strand" evidence="32">
    <location>
        <begin position="186"/>
        <end position="190"/>
    </location>
</feature>
<feature type="strand" evidence="32">
    <location>
        <begin position="192"/>
        <end position="195"/>
    </location>
</feature>
<feature type="strand" evidence="32">
    <location>
        <begin position="206"/>
        <end position="209"/>
    </location>
</feature>
<feature type="strand" evidence="32">
    <location>
        <begin position="212"/>
        <end position="219"/>
    </location>
</feature>
<feature type="strand" evidence="32">
    <location>
        <begin position="221"/>
        <end position="223"/>
    </location>
</feature>
<feature type="strand" evidence="32">
    <location>
        <begin position="227"/>
        <end position="229"/>
    </location>
</feature>
<feature type="strand" evidence="32">
    <location>
        <begin position="231"/>
        <end position="235"/>
    </location>
</feature>
<feature type="helix" evidence="32">
    <location>
        <begin position="236"/>
        <end position="239"/>
    </location>
</feature>
<feature type="helix" evidence="32">
    <location>
        <begin position="240"/>
        <end position="247"/>
    </location>
</feature>
<reference key="1">
    <citation type="journal article" date="1991" name="Proc. Natl. Acad. Sci. U.S.A.">
        <title>Wegener autoantigen and myeloblastin are encoded by a single mRNA.</title>
        <authorList>
            <person name="Labbaye C."/>
            <person name="Musette P."/>
            <person name="Cayre Y.E."/>
        </authorList>
    </citation>
    <scope>NUCLEOTIDE SEQUENCE [MRNA]</scope>
    <scope>VARIANTS ILE-119; THR-135 AND SER-136</scope>
</reference>
<reference key="2">
    <citation type="journal article" date="2004" name="Nature">
        <title>The DNA sequence and biology of human chromosome 19.</title>
        <authorList>
            <person name="Grimwood J."/>
            <person name="Gordon L.A."/>
            <person name="Olsen A.S."/>
            <person name="Terry A."/>
            <person name="Schmutz J."/>
            <person name="Lamerdin J.E."/>
            <person name="Hellsten U."/>
            <person name="Goodstein D."/>
            <person name="Couronne O."/>
            <person name="Tran-Gyamfi M."/>
            <person name="Aerts A."/>
            <person name="Altherr M."/>
            <person name="Ashworth L."/>
            <person name="Bajorek E."/>
            <person name="Black S."/>
            <person name="Branscomb E."/>
            <person name="Caenepeel S."/>
            <person name="Carrano A.V."/>
            <person name="Caoile C."/>
            <person name="Chan Y.M."/>
            <person name="Christensen M."/>
            <person name="Cleland C.A."/>
            <person name="Copeland A."/>
            <person name="Dalin E."/>
            <person name="Dehal P."/>
            <person name="Denys M."/>
            <person name="Detter J.C."/>
            <person name="Escobar J."/>
            <person name="Flowers D."/>
            <person name="Fotopulos D."/>
            <person name="Garcia C."/>
            <person name="Georgescu A.M."/>
            <person name="Glavina T."/>
            <person name="Gomez M."/>
            <person name="Gonzales E."/>
            <person name="Groza M."/>
            <person name="Hammon N."/>
            <person name="Hawkins T."/>
            <person name="Haydu L."/>
            <person name="Ho I."/>
            <person name="Huang W."/>
            <person name="Israni S."/>
            <person name="Jett J."/>
            <person name="Kadner K."/>
            <person name="Kimball H."/>
            <person name="Kobayashi A."/>
            <person name="Larionov V."/>
            <person name="Leem S.-H."/>
            <person name="Lopez F."/>
            <person name="Lou Y."/>
            <person name="Lowry S."/>
            <person name="Malfatti S."/>
            <person name="Martinez D."/>
            <person name="McCready P.M."/>
            <person name="Medina C."/>
            <person name="Morgan J."/>
            <person name="Nelson K."/>
            <person name="Nolan M."/>
            <person name="Ovcharenko I."/>
            <person name="Pitluck S."/>
            <person name="Pollard M."/>
            <person name="Popkie A.P."/>
            <person name="Predki P."/>
            <person name="Quan G."/>
            <person name="Ramirez L."/>
            <person name="Rash S."/>
            <person name="Retterer J."/>
            <person name="Rodriguez A."/>
            <person name="Rogers S."/>
            <person name="Salamov A."/>
            <person name="Salazar A."/>
            <person name="She X."/>
            <person name="Smith D."/>
            <person name="Slezak T."/>
            <person name="Solovyev V."/>
            <person name="Thayer N."/>
            <person name="Tice H."/>
            <person name="Tsai M."/>
            <person name="Ustaszewska A."/>
            <person name="Vo N."/>
            <person name="Wagner M."/>
            <person name="Wheeler J."/>
            <person name="Wu K."/>
            <person name="Xie G."/>
            <person name="Yang J."/>
            <person name="Dubchak I."/>
            <person name="Furey T.S."/>
            <person name="DeJong P."/>
            <person name="Dickson M."/>
            <person name="Gordon D."/>
            <person name="Eichler E.E."/>
            <person name="Pennacchio L.A."/>
            <person name="Richardson P."/>
            <person name="Stubbs L."/>
            <person name="Rokhsar D.S."/>
            <person name="Myers R.M."/>
            <person name="Rubin E.M."/>
            <person name="Lucas S.M."/>
        </authorList>
    </citation>
    <scope>NUCLEOTIDE SEQUENCE [LARGE SCALE GENOMIC DNA]</scope>
</reference>
<reference key="3">
    <citation type="submission" date="2005-09" db="EMBL/GenBank/DDBJ databases">
        <authorList>
            <person name="Mural R.J."/>
            <person name="Istrail S."/>
            <person name="Sutton G.G."/>
            <person name="Florea L."/>
            <person name="Halpern A.L."/>
            <person name="Mobarry C.M."/>
            <person name="Lippert R."/>
            <person name="Walenz B."/>
            <person name="Shatkay H."/>
            <person name="Dew I."/>
            <person name="Miller J.R."/>
            <person name="Flanigan M.J."/>
            <person name="Edwards N.J."/>
            <person name="Bolanos R."/>
            <person name="Fasulo D."/>
            <person name="Halldorsson B.V."/>
            <person name="Hannenhalli S."/>
            <person name="Turner R."/>
            <person name="Yooseph S."/>
            <person name="Lu F."/>
            <person name="Nusskern D.R."/>
            <person name="Shue B.C."/>
            <person name="Zheng X.H."/>
            <person name="Zhong F."/>
            <person name="Delcher A.L."/>
            <person name="Huson D.H."/>
            <person name="Kravitz S.A."/>
            <person name="Mouchard L."/>
            <person name="Reinert K."/>
            <person name="Remington K.A."/>
            <person name="Clark A.G."/>
            <person name="Waterman M.S."/>
            <person name="Eichler E.E."/>
            <person name="Adams M.D."/>
            <person name="Hunkapiller M.W."/>
            <person name="Myers E.W."/>
            <person name="Venter J.C."/>
        </authorList>
    </citation>
    <scope>NUCLEOTIDE SEQUENCE [LARGE SCALE GENOMIC DNA]</scope>
    <scope>VARIANT ILE-119</scope>
</reference>
<reference key="4">
    <citation type="journal article" date="2004" name="Genome Res.">
        <title>The status, quality, and expansion of the NIH full-length cDNA project: the Mammalian Gene Collection (MGC).</title>
        <authorList>
            <consortium name="The MGC Project Team"/>
        </authorList>
    </citation>
    <scope>NUCLEOTIDE SEQUENCE [LARGE SCALE MRNA]</scope>
    <scope>VARIANT ILE-119</scope>
</reference>
<reference key="5">
    <citation type="journal article" date="1992" name="Proc. Natl. Acad. Sci. U.S.A.">
        <title>Three human elastase-like genes coordinately expressed in the myelomonocyte lineage are organized as a single genetic locus on 19pter.</title>
        <authorList>
            <person name="Zimmer M."/>
            <person name="Medcalf R.L."/>
            <person name="Fink T.M."/>
            <person name="Mattmann C."/>
            <person name="Lichter P."/>
            <person name="Jenne D.E."/>
        </authorList>
    </citation>
    <scope>NUCLEOTIDE SEQUENCE [GENOMIC DNA] OF 1-20 AND 22-256</scope>
</reference>
<reference key="6">
    <citation type="journal article" date="1992" name="J. Biol. Chem.">
        <title>Structure, chromosomal assignment, and expression of the gene for proteinase-3. The Wegener's granulomatosis autoantigen.</title>
        <authorList>
            <person name="Sturrock A.B."/>
            <person name="Franklin K.F."/>
            <person name="Rao G."/>
            <person name="Marshall B.C."/>
            <person name="Rebentisch M.B."/>
            <person name="Lemons R.S."/>
            <person name="Hoidal J.R."/>
        </authorList>
    </citation>
    <scope>NUCLEOTIDE SEQUENCE [GENOMIC DNA] OF 1-254</scope>
    <scope>VARIANTS THR-135 AND SER-136</scope>
</reference>
<reference key="7">
    <citation type="journal article" date="1999" name="J. Immunother.">
        <title>Donor-recipient polymorphism of the proteinase 3 gene: a potential target for T-cell alloresponses to myeloid leukemia.</title>
        <authorList>
            <person name="Clave E."/>
            <person name="Molldrem J."/>
            <person name="Hensel N."/>
            <person name="Raptis A."/>
            <person name="Barrett A.J."/>
        </authorList>
    </citation>
    <scope>NUCLEOTIDE SEQUENCE [GENOMIC DNA] OF 1-200</scope>
    <scope>VARIANT ILE-119</scope>
</reference>
<reference key="8">
    <citation type="journal article" date="1991" name="Blood">
        <title>Wegener's autoantigen and leukemia.</title>
        <authorList>
            <person name="Musette P."/>
            <person name="Labbaye C."/>
            <person name="Dorner M.H."/>
            <person name="Cayre Y.E."/>
            <person name="Casanova J.-L."/>
            <person name="Kourilsky P."/>
        </authorList>
    </citation>
    <scope>NUCLEOTIDE SEQUENCE [MRNA] OF 1-42</scope>
</reference>
<reference key="9">
    <citation type="journal article" date="1990" name="J. Exp. Med.">
        <title>Cloning of cDNA for proteinase 3: a serine protease, antibiotic, and autoantigen from human neutrophils.</title>
        <authorList>
            <person name="Campanelli D."/>
            <person name="Melchior M."/>
            <person name="Fu Y."/>
            <person name="Nakata M."/>
            <person name="Shuman H."/>
            <person name="Nathan C."/>
            <person name="Gabay J.E."/>
        </authorList>
    </citation>
    <scope>NUCLEOTIDE SEQUENCE [MRNA] OF 2-256</scope>
    <scope>PROTEIN SEQUENCE OF 28-71; 156-181 AND 196-219</scope>
</reference>
<reference key="10">
    <citation type="journal article" date="1989" name="Cell">
        <title>Down-regulation of a serine protease, myeloblastin, causes growth arrest and differentiation of promyelocytic leukemia cells.</title>
        <authorList>
            <person name="Bories D."/>
            <person name="Raynal M.-C."/>
            <person name="Solomon D.H."/>
            <person name="Darzynkiewicz Z."/>
            <person name="Cayre Y.E."/>
        </authorList>
    </citation>
    <scope>NUCLEOTIDE SEQUENCE [MRNA] OF 20-256</scope>
    <scope>VARIANTS ILE-119; THR-135 AND SER-136</scope>
</reference>
<reference key="11">
    <citation type="journal article" date="1990" name="Nature">
        <title>Wegener's autoantigen decoded.</title>
        <authorList>
            <person name="Jenne D.E."/>
            <person name="Tschopp J."/>
            <person name="Luedemann J."/>
            <person name="Utecht B."/>
            <person name="Gross W.L."/>
        </authorList>
    </citation>
    <scope>NUCLEOTIDE SEQUENCE [MRNA] OF 20-256</scope>
    <scope>PROTEIN SEQUENCE OF 28-48</scope>
    <scope>VARIANTS ILE-119; THR-135 AND SER-136</scope>
    <scope>IDENTITY OF WEGENER'S AUTOANTIGEN WITH PR-3</scope>
</reference>
<reference key="12">
    <citation type="journal article" date="1991" name="J. Biol. Chem.">
        <title>Characterization of proteinase-3 (PR-3), a neutrophil serine proteinase. Structural and functional properties.</title>
        <authorList>
            <person name="Rao N.V."/>
            <person name="Wehner N.G."/>
            <person name="Marshall B.C."/>
            <person name="Gray W.R."/>
            <person name="Gray B.H."/>
            <person name="Hoidal J.R."/>
        </authorList>
    </citation>
    <scope>PROTEIN SEQUENCE OF 28-67 AND 228-244</scope>
    <scope>FUNCTION</scope>
    <scope>CATALYTIC ACTIVITY</scope>
    <scope>SUBCELLULAR LOCATION</scope>
    <scope>TISSUE SPECIFICITY</scope>
</reference>
<reference key="13">
    <citation type="journal article" date="1990" name="J. Biol. Chem.">
        <title>Characterization of two azurphil granule proteases with active-site homology to neutrophil elastase.</title>
        <authorList>
            <person name="Wilde C.G."/>
            <person name="Snable J.L."/>
            <person name="Griffith J.E."/>
            <person name="Scott R.W."/>
        </authorList>
    </citation>
    <scope>PROTEIN SEQUENCE OF 28-47 AND 196-219</scope>
</reference>
<reference key="14">
    <citation type="journal article" date="1990" name="Biol. Chem. Hoppe-Seyler">
        <title>Monoclonal antibodies specific for neutrophil proteinase 4. Production and use for isolation of the enzyme.</title>
        <authorList>
            <person name="Ohlsson K."/>
            <person name="Linder C."/>
            <person name="Rosengren M."/>
        </authorList>
    </citation>
    <scope>PROTEIN SEQUENCE OF 28-52</scope>
</reference>
<reference key="15">
    <citation type="journal article" date="1990" name="APMIS Suppl.">
        <title>The relation of 29 kD C-ANCA antigen to proteinase 3.</title>
        <authorList>
            <person name="Goldschmeding R."/>
            <person name="Dolman K.M."/>
            <person name="van den Ende M.E."/>
            <person name="van der Meer-Gerritsen C.H."/>
            <person name="Sonnenberg A."/>
            <person name="von dem Borne A.E."/>
        </authorList>
    </citation>
    <scope>PROTEIN SEQUENCE OF 28-48</scope>
</reference>
<reference key="16">
    <citation type="journal article" date="1989" name="Blood">
        <title>Wegener's granulomatosis autoantigen is a novel neutrophil serine proteinase.</title>
        <authorList>
            <person name="Niles J.L."/>
            <person name="McCluskey R.T."/>
            <person name="Ahmad M.F."/>
            <person name="Arnaout M.A."/>
        </authorList>
    </citation>
    <scope>PROTEIN SEQUENCE OF 28-47</scope>
</reference>
<reference key="17">
    <citation type="journal article" date="1989" name="Proc. Natl. Acad. Sci. U.S.A.">
        <title>Antibiotic proteins of human polymorphonuclear leukocytes.</title>
        <authorList>
            <person name="Gabay J.E."/>
            <person name="Scott R.W."/>
            <person name="Campanelli D."/>
            <person name="Griffith J."/>
            <person name="Wilde C."/>
            <person name="Marra M.N."/>
            <person name="Seeger M."/>
            <person name="Nathan C.F."/>
        </authorList>
    </citation>
    <scope>PROTEIN SEQUENCE OF 28-47</scope>
</reference>
<reference key="18">
    <citation type="journal article" date="1995" name="J. Immunol. Methods">
        <title>Use of proteinase 3 purified by reverse phase HPLC to detect autoantibodies in systemic vasculitis.</title>
        <authorList>
            <person name="Gaskin G."/>
            <person name="Kendal H."/>
            <person name="Coulthart A."/>
            <person name="Turner N."/>
            <person name="Pusey C.D."/>
        </authorList>
    </citation>
    <scope>PROTEIN SEQUENCE OF 28-47</scope>
    <scope>CATALYTIC ACTIVITY</scope>
    <scope>SUBCELLULAR LOCATION</scope>
    <scope>TISSUE SPECIFICITY</scope>
    <source>
        <tissue>Neutrophil</tissue>
    </source>
</reference>
<reference key="19">
    <citation type="journal article" date="1990" name="J. Exp. Med.">
        <title>Anti-neutrophil cytoplasm antibodies in Wegener's granulomatosis recognize an elastinolytic enzyme.</title>
        <authorList>
            <person name="Ludemann J."/>
            <person name="Utecht B."/>
            <person name="Gross W.L."/>
        </authorList>
    </citation>
    <scope>PROTEIN SEQUENCE OF 28-43</scope>
</reference>
<reference key="20">
    <citation type="journal article" date="1995" name="J. Biol. Chem.">
        <title>A novel form of dipeptidylpeptidase IV found in human serum. Isolation, characterization, and comparison with T lymphocyte membrane dipeptidylpeptidase IV (CD26).</title>
        <authorList>
            <person name="Duke-Cohan J.S."/>
            <person name="Morimoto C."/>
            <person name="Rocker J.A."/>
            <person name="Schlossman S.F."/>
        </authorList>
    </citation>
    <scope>PROTEIN SEQUENCE OF 110-121</scope>
    <scope>VARIANT ILE-119</scope>
    <source>
        <tissue>Serum</tissue>
    </source>
</reference>
<reference key="21">
    <citation type="journal article" date="1988" name="J. Clin. Invest.">
        <title>Proteinase 3. A distinct human polymorphonuclear leukocyte proteinase that produces emphysema in hamsters.</title>
        <authorList>
            <person name="Kao R.C."/>
            <person name="Wehner N.G."/>
            <person name="Skubitz K.M."/>
            <person name="Gray B.H."/>
            <person name="Hoidal J.R."/>
        </authorList>
    </citation>
    <scope>FUNCTION</scope>
    <scope>CATALYTIC ACTIVITY</scope>
    <scope>ACTIVITY REGULATION</scope>
    <scope>BIOPHYSICOCHEMICAL PROPERTIES</scope>
    <scope>SUBCELLULAR LOCATION</scope>
    <scope>TISSUE SPECIFICITY</scope>
</reference>
<reference key="22">
    <citation type="journal article" date="1990" name="Blood">
        <title>Identity of Wegener's autoantigen (p29) with proteinase 3 and myeloblastin.</title>
        <authorList>
            <person name="Gupta S.K."/>
            <person name="Niles J.L."/>
            <person name="McCluskey R.T."/>
            <person name="Arnaout M.A."/>
        </authorList>
    </citation>
    <scope>IDENTITY OF WEGENER'S AUTOANTIGEN WITH PROTEINASE 3</scope>
</reference>
<reference key="23">
    <citation type="journal article" date="2007" name="Blood">
        <title>NB1 mediates surface expression of the ANCA antigen proteinase 3 on human neutrophils.</title>
        <authorList>
            <person name="von Vietinghoff S."/>
            <person name="Tunnemann G."/>
            <person name="Eulenberg C."/>
            <person name="Wellner M."/>
            <person name="Cristina Cardoso M."/>
            <person name="Luft F.C."/>
            <person name="Kettritz R."/>
        </authorList>
    </citation>
    <scope>INTERACTION WITH CD177</scope>
    <scope>SUBCELLULAR LOCATION</scope>
    <scope>TISSUE SPECIFICITY</scope>
</reference>
<reference key="24">
    <citation type="journal article" date="2008" name="Clin. Exp. Immunol.">
        <title>Neutrophil surface presentation of the anti-neutrophil cytoplasmic antibody-antigen proteinase 3 depends on N-terminal processing.</title>
        <authorList>
            <person name="von Vietinghoff S."/>
            <person name="Eulenberg C."/>
            <person name="Wellner M."/>
            <person name="Luft F.C."/>
            <person name="Kettritz R."/>
        </authorList>
    </citation>
    <scope>SUBCELLULAR LOCATION</scope>
    <scope>TISSUE SPECIFICITY</scope>
    <scope>DEVELOPMENTAL STAGE</scope>
    <scope>INDUCTION</scope>
</reference>
<reference key="25">
    <citation type="journal article" date="2011" name="BMC Syst. Biol.">
        <title>Initial characterization of the human central proteome.</title>
        <authorList>
            <person name="Burkard T.R."/>
            <person name="Planyavsky M."/>
            <person name="Kaupe I."/>
            <person name="Breitwieser F.P."/>
            <person name="Buerckstuemmer T."/>
            <person name="Bennett K.L."/>
            <person name="Superti-Furga G."/>
            <person name="Colinge J."/>
        </authorList>
    </citation>
    <scope>IDENTIFICATION BY MASS SPECTROMETRY [LARGE SCALE ANALYSIS]</scope>
</reference>
<reference key="26">
    <citation type="journal article" date="2011" name="J. Biol. Chem.">
        <title>Complement receptor Mac-1 is an adaptor for NB1 (CD177)-mediated PR3-ANCA neutrophil activation.</title>
        <authorList>
            <person name="Jerke U."/>
            <person name="Rolle S."/>
            <person name="Dittmar G."/>
            <person name="Bayat B."/>
            <person name="Santoso S."/>
            <person name="Sporbert A."/>
            <person name="Luft F."/>
            <person name="Kettritz R."/>
        </authorList>
    </citation>
    <scope>SUBCELLULAR LOCATION</scope>
    <scope>TISSUE SPECIFICITY</scope>
</reference>
<reference key="27">
    <citation type="journal article" date="2012" name="J. Immunol.">
        <title>Proteinase 3 contributes to transendothelial migration of NB1-positive neutrophils.</title>
        <authorList>
            <person name="Kuckleburg C.J."/>
            <person name="Tilkens S.B."/>
            <person name="Santoso S."/>
            <person name="Newman P.J."/>
        </authorList>
    </citation>
    <scope>FUNCTION</scope>
    <scope>CATALYTIC ACTIVITY</scope>
    <scope>SUBCELLULAR LOCATION</scope>
    <scope>TISSUE SPECIFICITY</scope>
</reference>
<reference key="28">
    <citation type="journal article" date="2013" name="Arterioscler. Thromb. Vasc. Biol.">
        <title>Neutrophil proteinase 3 acts on protease-activated receptor-2 to enhance vascular endothelial cell barrier function.</title>
        <authorList>
            <person name="Kuckleburg C.J."/>
            <person name="Newman P.J."/>
        </authorList>
    </citation>
    <scope>FUNCTION</scope>
    <scope>CATALYTIC ACTIVITY</scope>
</reference>
<reference key="29">
    <citation type="journal article" date="2015" name="Proteomics">
        <title>N-terminome analysis of the human mitochondrial proteome.</title>
        <authorList>
            <person name="Vaca Jacome A.S."/>
            <person name="Rabilloud T."/>
            <person name="Schaeffer-Reiss C."/>
            <person name="Rompais M."/>
            <person name="Ayoub D."/>
            <person name="Lane L."/>
            <person name="Bairoch A."/>
            <person name="Van Dorsselaer A."/>
            <person name="Carapito C."/>
        </authorList>
    </citation>
    <scope>IDENTIFICATION BY MASS SPECTROMETRY [LARGE SCALE ANALYSIS]</scope>
</reference>
<reference key="30">
    <citation type="journal article" date="2017" name="Sci. Rep.">
        <title>Characterization of the CD177 interaction with the ANCA antigen proteinase 3.</title>
        <authorList>
            <person name="Jerke U."/>
            <person name="Marino S.F."/>
            <person name="Daumke O."/>
            <person name="Kettritz R."/>
        </authorList>
    </citation>
    <scope>FUNCTION</scope>
    <scope>CATALYTIC ACTIVITY</scope>
    <scope>INTERACTION WITH CD177</scope>
    <scope>SUBUNIT</scope>
    <scope>SUBCELLULAR LOCATION</scope>
    <scope>TISSUE SPECIFICITY</scope>
</reference>
<reference key="31">
    <citation type="journal article" date="2019" name="Nat. Immunol.">
        <title>SERPINB1-mediated checkpoint of inflammatory caspase activation.</title>
        <authorList>
            <person name="Choi Y.J."/>
            <person name="Kim S."/>
            <person name="Choi Y."/>
            <person name="Nielsen T.B."/>
            <person name="Yan J."/>
            <person name="Lu A."/>
            <person name="Ruan J."/>
            <person name="Lee H.R."/>
            <person name="Wu H."/>
            <person name="Spellberg B."/>
            <person name="Jung J.U."/>
        </authorList>
    </citation>
    <scope>INTERACTION WITH SERPINB1</scope>
</reference>
<reference key="32">
    <citation type="journal article" date="2022" name="Nat. Commun.">
        <title>GPR97 triggers inflammatory processes in human neutrophils via a macromolecular complex upstream of PAR2 activation.</title>
        <authorList>
            <person name="Chu T.Y."/>
            <person name="Zheng-Gerard C."/>
            <person name="Huang K.Y."/>
            <person name="Chang Y.C."/>
            <person name="Chen Y.W."/>
            <person name="I K.Y."/>
            <person name="Lo Y.L."/>
            <person name="Chiang N.Y."/>
            <person name="Chen H.Y."/>
            <person name="Stacey M."/>
            <person name="Gordon S."/>
            <person name="Tseng W.Y."/>
            <person name="Sun C.Y."/>
            <person name="Wu Y.M."/>
            <person name="Pan Y.S."/>
            <person name="Huang C.H."/>
            <person name="Lin C.Y."/>
            <person name="Chen T.C."/>
            <person name="El Omari K."/>
            <person name="Antonelou M."/>
            <person name="Henderson S.R."/>
            <person name="Salama A."/>
            <person name="Seiradake E."/>
            <person name="Lin H.H."/>
        </authorList>
    </citation>
    <scope>FUNCTION</scope>
    <scope>INTERACTION WITH ADGRG3</scope>
</reference>
<reference key="33">
    <citation type="journal article" date="1996" name="J. Mol. Biol.">
        <title>The crystal structure of PR3, a neutrophil serine proteinase antigen of Wegener's granulomatosis antibodies.</title>
        <authorList>
            <person name="Fujinaga M."/>
            <person name="Charnaia M.M."/>
            <person name="Halenbeck R."/>
            <person name="Koths K."/>
            <person name="James M.N.G."/>
        </authorList>
    </citation>
    <scope>X-RAY CRYSTALLOGRAPHY (2.2 ANGSTROMS)</scope>
    <scope>GLYCOSYLATION AT ASN-174</scope>
    <scope>DISULFIDE BONDS</scope>
</reference>
<protein>
    <recommendedName>
        <fullName>Myeloblastin</fullName>
        <ecNumber evidence="8 10 11 14 16 19">3.4.21.76</ecNumber>
    </recommendedName>
    <alternativeName>
        <fullName>AGP7</fullName>
    </alternativeName>
    <alternativeName>
        <fullName>C-ANCA antigen</fullName>
    </alternativeName>
    <alternativeName>
        <fullName>Leukocyte proteinase 3</fullName>
        <shortName>PR-3</shortName>
        <shortName>PR3</shortName>
    </alternativeName>
    <alternativeName>
        <fullName>Neutrophil proteinase 4</fullName>
        <shortName>NP-4</shortName>
    </alternativeName>
    <alternativeName>
        <fullName>P29</fullName>
    </alternativeName>
    <alternativeName>
        <fullName>Wegener autoantigen</fullName>
    </alternativeName>
</protein>
<evidence type="ECO:0000255" key="1"/>
<evidence type="ECO:0000255" key="2">
    <source>
        <dbReference type="PROSITE-ProRule" id="PRU00274"/>
    </source>
</evidence>
<evidence type="ECO:0000269" key="3">
    <source>
    </source>
</evidence>
<evidence type="ECO:0000269" key="4">
    <source>
    </source>
</evidence>
<evidence type="ECO:0000269" key="5">
    <source>
    </source>
</evidence>
<evidence type="ECO:0000269" key="6">
    <source>
    </source>
</evidence>
<evidence type="ECO:0000269" key="7">
    <source>
    </source>
</evidence>
<evidence type="ECO:0000269" key="8">
    <source>
    </source>
</evidence>
<evidence type="ECO:0000269" key="9">
    <source>
    </source>
</evidence>
<evidence type="ECO:0000269" key="10">
    <source>
    </source>
</evidence>
<evidence type="ECO:0000269" key="11">
    <source>
    </source>
</evidence>
<evidence type="ECO:0000269" key="12">
    <source>
    </source>
</evidence>
<evidence type="ECO:0000269" key="13">
    <source>
    </source>
</evidence>
<evidence type="ECO:0000269" key="14">
    <source>
    </source>
</evidence>
<evidence type="ECO:0000269" key="15">
    <source>
    </source>
</evidence>
<evidence type="ECO:0000269" key="16">
    <source>
    </source>
</evidence>
<evidence type="ECO:0000269" key="17">
    <source>
    </source>
</evidence>
<evidence type="ECO:0000269" key="18">
    <source>
    </source>
</evidence>
<evidence type="ECO:0000269" key="19">
    <source>
    </source>
</evidence>
<evidence type="ECO:0000269" key="20">
    <source>
    </source>
</evidence>
<evidence type="ECO:0000269" key="21">
    <source>
    </source>
</evidence>
<evidence type="ECO:0000269" key="22">
    <source ref="3"/>
</evidence>
<evidence type="ECO:0000303" key="23">
    <source>
    </source>
</evidence>
<evidence type="ECO:0000303" key="24">
    <source>
    </source>
</evidence>
<evidence type="ECO:0000305" key="25"/>
<evidence type="ECO:0000305" key="26">
    <source>
    </source>
</evidence>
<evidence type="ECO:0000305" key="27">
    <source>
    </source>
</evidence>
<evidence type="ECO:0000305" key="28">
    <source>
    </source>
</evidence>
<evidence type="ECO:0000305" key="29">
    <source>
    </source>
</evidence>
<evidence type="ECO:0000305" key="30">
    <source>
    </source>
</evidence>
<evidence type="ECO:0007744" key="31">
    <source>
        <dbReference type="PDB" id="1FUJ"/>
    </source>
</evidence>
<evidence type="ECO:0007829" key="32">
    <source>
        <dbReference type="PDB" id="1FUJ"/>
    </source>
</evidence>
<comment type="function">
    <text evidence="8 10 11 14 16 17">Serine protease that degrades elastin, fibronectin, laminin, vitronectin, and collagen types I, III, and IV (in vitro) (PubMed:2033050, PubMed:28240246, PubMed:3198760). By cleaving and activating receptor F2RL1/PAR-2, enhances endothelial cell barrier function and thus vascular integrity during neutrophil transendothelial migration (PubMed:23202369). Plays a role in neutrophil transendothelial migration, probably when associated with CD177 (PubMed:22266279). Triggers inflammatory processes in neutrophils by interacting with ADGRG3 upstream of F2RL1/PAR2 activation (PubMed:36302784).</text>
</comment>
<comment type="catalytic activity">
    <reaction evidence="8 10 11 14 16 19">
        <text>Hydrolysis of proteins, including elastin, by preferential cleavage: -Ala-|-Xaa- &gt; -Val-|-Xaa-.</text>
        <dbReference type="EC" id="3.4.21.76"/>
    </reaction>
</comment>
<comment type="activity regulation">
    <text evidence="16">Inhibited by phenylmethanesulfonyl fluoride (PMSF) and diisopropyl fluorophosphate (DFP).</text>
</comment>
<comment type="biophysicochemical properties">
    <phDependence>
        <text evidence="16">Optimum pH is 7.4.</text>
    </phDependence>
</comment>
<comment type="subunit">
    <text evidence="6 14 15 17">May form dimers (PubMed:28240246). Interacts with CD177; the interaction tethers PRTN3 to the cell surface; the interaction is direct (PubMed:17244676, PubMed:28240246). Interacts with SERPINB1 (PubMed:30692621). Interacts with ADGRG3 (PubMed:36302784).</text>
</comment>
<comment type="interaction">
    <interactant intactId="EBI-465028">
        <id>P24158</id>
    </interactant>
    <interactant intactId="EBI-15570379">
        <id>P24001-4</id>
        <label>IL32</label>
    </interactant>
    <organismsDiffer>false</organismsDiffer>
    <experiments>3</experiments>
</comment>
<comment type="subcellular location">
    <subcellularLocation>
        <location evidence="7 8 16 19 27">Cytoplasmic granule</location>
    </subcellularLocation>
    <subcellularLocation>
        <location evidence="7 14">Secreted</location>
    </subcellularLocation>
    <subcellularLocation>
        <location evidence="6 7 10 14">Cell membrane</location>
        <topology evidence="6 7 10 14">Peripheral membrane protein</topology>
        <orientation evidence="6 7 10 14">Extracellular side</orientation>
    </subcellularLocation>
    <subcellularLocation>
        <location evidence="9">Membrane raft</location>
        <topology evidence="9">Peripheral membrane protein</topology>
        <orientation evidence="9">Extracellular side</orientation>
    </subcellularLocation>
    <text evidence="7 8 10 14 16 19">Localizes predominantly to azurophil granules (primary secretory granules) in neutrophils (PubMed:18462208, PubMed:2033050, PubMed:3198760, PubMed:7897245). Secreted upon neutrophil stimulation by TNF-alpha, lipopolysaccharide (LPS), fMLP and CXCL8/IL8 or during neutrophil transmigration (PubMed:22266279, PubMed:28240246). Following secretion tethered to the cell membrane by CD177 (PubMed:18462208, PubMed:22266279).</text>
</comment>
<comment type="tissue specificity">
    <text evidence="6 7 8 9 10 14 16 19">Expressed in polymorphonuclear leukocytes (at protein level) (PubMed:2033050, PubMed:3198760, PubMed:7897245). Expressed in neutrophils (at protein level) (PubMed:17244676, PubMed:18462208, PubMed:21193407, PubMed:22266279, PubMed:28240246). Expressed in differentiating neutrophils (PubMed:18462208).</text>
</comment>
<comment type="induction">
    <text evidence="7">Induced during CSF3/G-CSF-mediated neutrophil differentiation.</text>
</comment>
<comment type="disease">
    <text evidence="16 23 24">Is the major autoantigen in anti-neutrophil cytoplasmic autoantibody (ANCA)-associated vasculitis (Wegener's granulomatosis) (PubMed:2377228, PubMed:2679910). This complex, systemic disease is characterized by granulomatous inflammation with necrotizing lesions in the respiratory tract, glomerulonephritis, vasculitis, and anti-neutrophil cytoplasmic autoantibodies detected in patient sera (PubMed:2377228, PubMed:2679910). PRTN3 causes emphysema when administered by tracheal insufflation to hamsters (PubMed:3198760).</text>
</comment>
<comment type="similarity">
    <text evidence="2">Belongs to the peptidase S1 family. Elastase subfamily.</text>
</comment>
<comment type="sequence caution" evidence="25">
    <conflict type="frameshift">
        <sequence resource="EMBL-CDS" id="AAA36342"/>
    </conflict>
</comment>
<comment type="sequence caution" evidence="25">
    <conflict type="erroneous initiation">
        <sequence resource="EMBL-CDS" id="CAA39598"/>
    </conflict>
</comment>
<comment type="online information" name="Wikipedia">
    <link uri="https://en.wikipedia.org/wiki/Proteinase_3"/>
    <text>Proteinase 3 entry</text>
</comment>